<feature type="chain" id="PRO_1000003150" description="Ribosome-recycling factor">
    <location>
        <begin position="1"/>
        <end position="186"/>
    </location>
</feature>
<accession>Q11XK1</accession>
<organism>
    <name type="scientific">Cytophaga hutchinsonii (strain ATCC 33406 / DSM 1761 / CIP 103989 / NBRC 15051 / NCIMB 9469 / D465)</name>
    <dbReference type="NCBI Taxonomy" id="269798"/>
    <lineage>
        <taxon>Bacteria</taxon>
        <taxon>Pseudomonadati</taxon>
        <taxon>Bacteroidota</taxon>
        <taxon>Cytophagia</taxon>
        <taxon>Cytophagales</taxon>
        <taxon>Cytophagaceae</taxon>
        <taxon>Cytophaga</taxon>
    </lineage>
</organism>
<gene>
    <name evidence="1" type="primary">frr</name>
    <name type="ordered locus">CHU_0578</name>
</gene>
<dbReference type="EMBL" id="CP000383">
    <property type="protein sequence ID" value="ABG57865.1"/>
    <property type="molecule type" value="Genomic_DNA"/>
</dbReference>
<dbReference type="RefSeq" id="WP_011583981.1">
    <property type="nucleotide sequence ID" value="NC_008255.1"/>
</dbReference>
<dbReference type="SMR" id="Q11XK1"/>
<dbReference type="STRING" id="269798.CHU_0578"/>
<dbReference type="KEGG" id="chu:CHU_0578"/>
<dbReference type="eggNOG" id="COG0233">
    <property type="taxonomic scope" value="Bacteria"/>
</dbReference>
<dbReference type="HOGENOM" id="CLU_073981_2_0_10"/>
<dbReference type="OrthoDB" id="9804006at2"/>
<dbReference type="Proteomes" id="UP000001822">
    <property type="component" value="Chromosome"/>
</dbReference>
<dbReference type="GO" id="GO:0005737">
    <property type="term" value="C:cytoplasm"/>
    <property type="evidence" value="ECO:0007669"/>
    <property type="project" value="UniProtKB-SubCell"/>
</dbReference>
<dbReference type="GO" id="GO:0043023">
    <property type="term" value="F:ribosomal large subunit binding"/>
    <property type="evidence" value="ECO:0007669"/>
    <property type="project" value="TreeGrafter"/>
</dbReference>
<dbReference type="GO" id="GO:0006415">
    <property type="term" value="P:translational termination"/>
    <property type="evidence" value="ECO:0007669"/>
    <property type="project" value="UniProtKB-UniRule"/>
</dbReference>
<dbReference type="CDD" id="cd00520">
    <property type="entry name" value="RRF"/>
    <property type="match status" value="1"/>
</dbReference>
<dbReference type="FunFam" id="1.10.132.20:FF:000001">
    <property type="entry name" value="Ribosome-recycling factor"/>
    <property type="match status" value="1"/>
</dbReference>
<dbReference type="FunFam" id="3.30.1360.40:FF:000001">
    <property type="entry name" value="Ribosome-recycling factor"/>
    <property type="match status" value="1"/>
</dbReference>
<dbReference type="Gene3D" id="3.30.1360.40">
    <property type="match status" value="1"/>
</dbReference>
<dbReference type="Gene3D" id="1.10.132.20">
    <property type="entry name" value="Ribosome-recycling factor"/>
    <property type="match status" value="1"/>
</dbReference>
<dbReference type="HAMAP" id="MF_00040">
    <property type="entry name" value="RRF"/>
    <property type="match status" value="1"/>
</dbReference>
<dbReference type="InterPro" id="IPR002661">
    <property type="entry name" value="Ribosome_recyc_fac"/>
</dbReference>
<dbReference type="InterPro" id="IPR023584">
    <property type="entry name" value="Ribosome_recyc_fac_dom"/>
</dbReference>
<dbReference type="InterPro" id="IPR036191">
    <property type="entry name" value="RRF_sf"/>
</dbReference>
<dbReference type="NCBIfam" id="TIGR00496">
    <property type="entry name" value="frr"/>
    <property type="match status" value="1"/>
</dbReference>
<dbReference type="PANTHER" id="PTHR20982:SF3">
    <property type="entry name" value="MITOCHONDRIAL RIBOSOME RECYCLING FACTOR PSEUDO 1"/>
    <property type="match status" value="1"/>
</dbReference>
<dbReference type="PANTHER" id="PTHR20982">
    <property type="entry name" value="RIBOSOME RECYCLING FACTOR"/>
    <property type="match status" value="1"/>
</dbReference>
<dbReference type="Pfam" id="PF01765">
    <property type="entry name" value="RRF"/>
    <property type="match status" value="1"/>
</dbReference>
<dbReference type="SUPFAM" id="SSF55194">
    <property type="entry name" value="Ribosome recycling factor, RRF"/>
    <property type="match status" value="1"/>
</dbReference>
<sequence>MEEINLYLDDAKDSMQKAIKHTELELSKIRAGKASPNMFDGIMVDYYGSSTPLAQVATVSVPEPRSITIKAYEKSMVTTIEKAIRDANMGFNPQNDGDVIRINVPPLTEERRRDLVKQTKAEGESGKVRIRKIRQETNDELKKLLKDGASEDEVKRAEEVVQALTNDTSAKLEALIAAKEKELMTV</sequence>
<keyword id="KW-0963">Cytoplasm</keyword>
<keyword id="KW-0648">Protein biosynthesis</keyword>
<keyword id="KW-1185">Reference proteome</keyword>
<comment type="function">
    <text evidence="1">Responsible for the release of ribosomes from messenger RNA at the termination of protein biosynthesis. May increase the efficiency of translation by recycling ribosomes from one round of translation to another.</text>
</comment>
<comment type="subcellular location">
    <subcellularLocation>
        <location evidence="1">Cytoplasm</location>
    </subcellularLocation>
</comment>
<comment type="similarity">
    <text evidence="1">Belongs to the RRF family.</text>
</comment>
<proteinExistence type="inferred from homology"/>
<name>RRF_CYTH3</name>
<evidence type="ECO:0000255" key="1">
    <source>
        <dbReference type="HAMAP-Rule" id="MF_00040"/>
    </source>
</evidence>
<reference key="1">
    <citation type="journal article" date="2007" name="Appl. Environ. Microbiol.">
        <title>Genome sequence of the cellulolytic gliding bacterium Cytophaga hutchinsonii.</title>
        <authorList>
            <person name="Xie G."/>
            <person name="Bruce D.C."/>
            <person name="Challacombe J.F."/>
            <person name="Chertkov O."/>
            <person name="Detter J.C."/>
            <person name="Gilna P."/>
            <person name="Han C.S."/>
            <person name="Lucas S."/>
            <person name="Misra M."/>
            <person name="Myers G.L."/>
            <person name="Richardson P."/>
            <person name="Tapia R."/>
            <person name="Thayer N."/>
            <person name="Thompson L.S."/>
            <person name="Brettin T.S."/>
            <person name="Henrissat B."/>
            <person name="Wilson D.B."/>
            <person name="McBride M.J."/>
        </authorList>
    </citation>
    <scope>NUCLEOTIDE SEQUENCE [LARGE SCALE GENOMIC DNA]</scope>
    <source>
        <strain>ATCC 33406 / DSM 1761 / JCM 20678 / CIP 103989 / IAM 12607 / NBRC 15051 / NCIMB 9469 / D465</strain>
    </source>
</reference>
<protein>
    <recommendedName>
        <fullName evidence="1">Ribosome-recycling factor</fullName>
        <shortName evidence="1">RRF</shortName>
    </recommendedName>
    <alternativeName>
        <fullName evidence="1">Ribosome-releasing factor</fullName>
    </alternativeName>
</protein>